<name>EFTS_HELPY</name>
<sequence length="355" mass="39695">MSGISAQLVKKLRDLTDAGMMDCKKALVEVAGDLQKAIDFLREKGLSKAAKKADRIAAEGVVALEVAPDFKSAMIVEINSETDFVAKNEGFKELVKKTLETIKAHNIHTTEELLKSPLDNKPFEEYLHSQIAVIGENILVRKIAHLKAPSSHIINGYAHSNARVGVLIGIKYDNEKNAPKVVELARNIAMHAAAMKPQVLDCKDFSLDFVKKETLALIAEIEKDNEEAKRLGKPLKNIPTFGSRIELSDEVLAHQKKAFEDELKAQGKPEKIWDKIVPGKMERFIADNTLIDQRLTLLGQFYVMDDKKTIAQVVADCSKEWNDDLKITEYVRFELGEGIEKKAENFAEEVALQMK</sequence>
<protein>
    <recommendedName>
        <fullName>Elongation factor Ts</fullName>
        <shortName>EF-Ts</shortName>
    </recommendedName>
</protein>
<evidence type="ECO:0000250" key="1"/>
<evidence type="ECO:0000305" key="2"/>
<organism>
    <name type="scientific">Helicobacter pylori (strain ATCC 700392 / 26695)</name>
    <name type="common">Campylobacter pylori</name>
    <dbReference type="NCBI Taxonomy" id="85962"/>
    <lineage>
        <taxon>Bacteria</taxon>
        <taxon>Pseudomonadati</taxon>
        <taxon>Campylobacterota</taxon>
        <taxon>Epsilonproteobacteria</taxon>
        <taxon>Campylobacterales</taxon>
        <taxon>Helicobacteraceae</taxon>
        <taxon>Helicobacter</taxon>
    </lineage>
</organism>
<reference key="1">
    <citation type="journal article" date="1997" name="Nature">
        <title>The complete genome sequence of the gastric pathogen Helicobacter pylori.</title>
        <authorList>
            <person name="Tomb J.-F."/>
            <person name="White O."/>
            <person name="Kerlavage A.R."/>
            <person name="Clayton R.A."/>
            <person name="Sutton G.G."/>
            <person name="Fleischmann R.D."/>
            <person name="Ketchum K.A."/>
            <person name="Klenk H.-P."/>
            <person name="Gill S.R."/>
            <person name="Dougherty B.A."/>
            <person name="Nelson K.E."/>
            <person name="Quackenbush J."/>
            <person name="Zhou L."/>
            <person name="Kirkness E.F."/>
            <person name="Peterson S.N."/>
            <person name="Loftus B.J."/>
            <person name="Richardson D.L."/>
            <person name="Dodson R.J."/>
            <person name="Khalak H.G."/>
            <person name="Glodek A."/>
            <person name="McKenney K."/>
            <person name="FitzGerald L.M."/>
            <person name="Lee N."/>
            <person name="Adams M.D."/>
            <person name="Hickey E.K."/>
            <person name="Berg D.E."/>
            <person name="Gocayne J.D."/>
            <person name="Utterback T.R."/>
            <person name="Peterson J.D."/>
            <person name="Kelley J.M."/>
            <person name="Cotton M.D."/>
            <person name="Weidman J.F."/>
            <person name="Fujii C."/>
            <person name="Bowman C."/>
            <person name="Watthey L."/>
            <person name="Wallin E."/>
            <person name="Hayes W.S."/>
            <person name="Borodovsky M."/>
            <person name="Karp P.D."/>
            <person name="Smith H.O."/>
            <person name="Fraser C.M."/>
            <person name="Venter J.C."/>
        </authorList>
    </citation>
    <scope>NUCLEOTIDE SEQUENCE [LARGE SCALE GENOMIC DNA]</scope>
    <source>
        <strain>ATCC 700392 / 26695</strain>
    </source>
</reference>
<accession>P55975</accession>
<feature type="chain" id="PRO_0000161131" description="Elongation factor Ts">
    <location>
        <begin position="1"/>
        <end position="355"/>
    </location>
</feature>
<feature type="region of interest" description="Involved in Mg(2+) ion dislocation from EF-Tu" evidence="1">
    <location>
        <begin position="82"/>
        <end position="85"/>
    </location>
</feature>
<comment type="function">
    <text evidence="1">Associates with the EF-Tu.GDP complex and induces the exchange of GDP to GTP. It remains bound to the aminoacyl-tRNA.EF-Tu.GTP complex up to the GTP hydrolysis stage on the ribosome (By similarity).</text>
</comment>
<comment type="subcellular location">
    <subcellularLocation>
        <location evidence="1">Cytoplasm</location>
    </subcellularLocation>
</comment>
<comment type="similarity">
    <text evidence="2">Belongs to the EF-Ts family.</text>
</comment>
<gene>
    <name type="primary">tsf</name>
    <name type="ordered locus">HP_1555</name>
</gene>
<keyword id="KW-0963">Cytoplasm</keyword>
<keyword id="KW-0251">Elongation factor</keyword>
<keyword id="KW-0648">Protein biosynthesis</keyword>
<keyword id="KW-1185">Reference proteome</keyword>
<proteinExistence type="inferred from homology"/>
<dbReference type="EMBL" id="AE000511">
    <property type="protein sequence ID" value="AAD08595.1"/>
    <property type="molecule type" value="Genomic_DNA"/>
</dbReference>
<dbReference type="PIR" id="C64714">
    <property type="entry name" value="C64714"/>
</dbReference>
<dbReference type="RefSeq" id="NP_208346.1">
    <property type="nucleotide sequence ID" value="NC_000915.1"/>
</dbReference>
<dbReference type="RefSeq" id="WP_000014397.1">
    <property type="nucleotide sequence ID" value="NC_018939.1"/>
</dbReference>
<dbReference type="SMR" id="P55975"/>
<dbReference type="FunCoup" id="P55975">
    <property type="interactions" value="386"/>
</dbReference>
<dbReference type="STRING" id="85962.HP_1555"/>
<dbReference type="PaxDb" id="85962-C694_08055"/>
<dbReference type="EnsemblBacteria" id="AAD08595">
    <property type="protein sequence ID" value="AAD08595"/>
    <property type="gene ID" value="HP_1555"/>
</dbReference>
<dbReference type="KEGG" id="heo:C694_08055"/>
<dbReference type="KEGG" id="hpy:HP_1555"/>
<dbReference type="PATRIC" id="fig|85962.47.peg.1670"/>
<dbReference type="eggNOG" id="COG0264">
    <property type="taxonomic scope" value="Bacteria"/>
</dbReference>
<dbReference type="InParanoid" id="P55975"/>
<dbReference type="OrthoDB" id="9808348at2"/>
<dbReference type="PhylomeDB" id="P55975"/>
<dbReference type="Proteomes" id="UP000000429">
    <property type="component" value="Chromosome"/>
</dbReference>
<dbReference type="GO" id="GO:0005737">
    <property type="term" value="C:cytoplasm"/>
    <property type="evidence" value="ECO:0007669"/>
    <property type="project" value="UniProtKB-SubCell"/>
</dbReference>
<dbReference type="GO" id="GO:0003746">
    <property type="term" value="F:translation elongation factor activity"/>
    <property type="evidence" value="ECO:0000318"/>
    <property type="project" value="GO_Central"/>
</dbReference>
<dbReference type="GO" id="GO:0006414">
    <property type="term" value="P:translational elongation"/>
    <property type="evidence" value="ECO:0000318"/>
    <property type="project" value="GO_Central"/>
</dbReference>
<dbReference type="CDD" id="cd14275">
    <property type="entry name" value="UBA_EF-Ts"/>
    <property type="match status" value="1"/>
</dbReference>
<dbReference type="FunFam" id="1.10.286.20:FF:000004">
    <property type="entry name" value="Elongation factor Ts"/>
    <property type="match status" value="1"/>
</dbReference>
<dbReference type="FunFam" id="1.10.8.10:FF:000001">
    <property type="entry name" value="Elongation factor Ts"/>
    <property type="match status" value="1"/>
</dbReference>
<dbReference type="FunFam" id="3.30.479.20:FF:000029">
    <property type="entry name" value="Elongation factor Ts"/>
    <property type="match status" value="1"/>
</dbReference>
<dbReference type="Gene3D" id="1.10.286.20">
    <property type="match status" value="1"/>
</dbReference>
<dbReference type="Gene3D" id="1.10.8.10">
    <property type="entry name" value="DNA helicase RuvA subunit, C-terminal domain"/>
    <property type="match status" value="1"/>
</dbReference>
<dbReference type="Gene3D" id="3.30.479.20">
    <property type="entry name" value="Elongation factor Ts, dimerisation domain"/>
    <property type="match status" value="2"/>
</dbReference>
<dbReference type="HAMAP" id="MF_00050">
    <property type="entry name" value="EF_Ts"/>
    <property type="match status" value="1"/>
</dbReference>
<dbReference type="InterPro" id="IPR036402">
    <property type="entry name" value="EF-Ts_dimer_sf"/>
</dbReference>
<dbReference type="InterPro" id="IPR001816">
    <property type="entry name" value="Transl_elong_EFTs/EF1B"/>
</dbReference>
<dbReference type="InterPro" id="IPR014039">
    <property type="entry name" value="Transl_elong_EFTs/EF1B_dimer"/>
</dbReference>
<dbReference type="InterPro" id="IPR018101">
    <property type="entry name" value="Transl_elong_Ts_CS"/>
</dbReference>
<dbReference type="InterPro" id="IPR009060">
    <property type="entry name" value="UBA-like_sf"/>
</dbReference>
<dbReference type="NCBIfam" id="TIGR00116">
    <property type="entry name" value="tsf"/>
    <property type="match status" value="1"/>
</dbReference>
<dbReference type="PANTHER" id="PTHR11741">
    <property type="entry name" value="ELONGATION FACTOR TS"/>
    <property type="match status" value="1"/>
</dbReference>
<dbReference type="PANTHER" id="PTHR11741:SF0">
    <property type="entry name" value="ELONGATION FACTOR TS, MITOCHONDRIAL"/>
    <property type="match status" value="1"/>
</dbReference>
<dbReference type="Pfam" id="PF00889">
    <property type="entry name" value="EF_TS"/>
    <property type="match status" value="1"/>
</dbReference>
<dbReference type="SUPFAM" id="SSF54713">
    <property type="entry name" value="Elongation factor Ts (EF-Ts), dimerisation domain"/>
    <property type="match status" value="1"/>
</dbReference>
<dbReference type="SUPFAM" id="SSF46934">
    <property type="entry name" value="UBA-like"/>
    <property type="match status" value="1"/>
</dbReference>
<dbReference type="PROSITE" id="PS01126">
    <property type="entry name" value="EF_TS_1"/>
    <property type="match status" value="1"/>
</dbReference>
<dbReference type="PROSITE" id="PS01127">
    <property type="entry name" value="EF_TS_2"/>
    <property type="match status" value="1"/>
</dbReference>